<evidence type="ECO:0000255" key="1">
    <source>
        <dbReference type="HAMAP-Rule" id="MF_01334"/>
    </source>
</evidence>
<evidence type="ECO:0000305" key="2"/>
<accession>B0UGY1</accession>
<organism>
    <name type="scientific">Methylobacterium sp. (strain 4-46)</name>
    <dbReference type="NCBI Taxonomy" id="426117"/>
    <lineage>
        <taxon>Bacteria</taxon>
        <taxon>Pseudomonadati</taxon>
        <taxon>Pseudomonadota</taxon>
        <taxon>Alphaproteobacteria</taxon>
        <taxon>Hyphomicrobiales</taxon>
        <taxon>Methylobacteriaceae</taxon>
        <taxon>Methylobacterium</taxon>
    </lineage>
</organism>
<dbReference type="EMBL" id="CP000943">
    <property type="protein sequence ID" value="ACA16850.1"/>
    <property type="molecule type" value="Genomic_DNA"/>
</dbReference>
<dbReference type="RefSeq" id="WP_012332259.1">
    <property type="nucleotide sequence ID" value="NC_010511.1"/>
</dbReference>
<dbReference type="SMR" id="B0UGY1"/>
<dbReference type="STRING" id="426117.M446_2392"/>
<dbReference type="KEGG" id="met:M446_2392"/>
<dbReference type="eggNOG" id="COG1825">
    <property type="taxonomic scope" value="Bacteria"/>
</dbReference>
<dbReference type="HOGENOM" id="CLU_075939_0_0_5"/>
<dbReference type="GO" id="GO:0022625">
    <property type="term" value="C:cytosolic large ribosomal subunit"/>
    <property type="evidence" value="ECO:0007669"/>
    <property type="project" value="TreeGrafter"/>
</dbReference>
<dbReference type="GO" id="GO:0008097">
    <property type="term" value="F:5S rRNA binding"/>
    <property type="evidence" value="ECO:0007669"/>
    <property type="project" value="InterPro"/>
</dbReference>
<dbReference type="GO" id="GO:0003735">
    <property type="term" value="F:structural constituent of ribosome"/>
    <property type="evidence" value="ECO:0007669"/>
    <property type="project" value="InterPro"/>
</dbReference>
<dbReference type="GO" id="GO:0006412">
    <property type="term" value="P:translation"/>
    <property type="evidence" value="ECO:0007669"/>
    <property type="project" value="UniProtKB-UniRule"/>
</dbReference>
<dbReference type="CDD" id="cd00495">
    <property type="entry name" value="Ribosomal_L25_TL5_CTC"/>
    <property type="match status" value="1"/>
</dbReference>
<dbReference type="Gene3D" id="2.170.120.20">
    <property type="entry name" value="Ribosomal protein L25, beta domain"/>
    <property type="match status" value="1"/>
</dbReference>
<dbReference type="Gene3D" id="2.40.240.10">
    <property type="entry name" value="Ribosomal Protein L25, Chain P"/>
    <property type="match status" value="1"/>
</dbReference>
<dbReference type="HAMAP" id="MF_01334">
    <property type="entry name" value="Ribosomal_bL25_CTC"/>
    <property type="match status" value="1"/>
</dbReference>
<dbReference type="InterPro" id="IPR020056">
    <property type="entry name" value="Rbsml_bL25/Gln-tRNA_synth_N"/>
</dbReference>
<dbReference type="InterPro" id="IPR011035">
    <property type="entry name" value="Ribosomal_bL25/Gln-tRNA_synth"/>
</dbReference>
<dbReference type="InterPro" id="IPR020057">
    <property type="entry name" value="Ribosomal_bL25_b-dom"/>
</dbReference>
<dbReference type="InterPro" id="IPR037121">
    <property type="entry name" value="Ribosomal_bL25_C"/>
</dbReference>
<dbReference type="InterPro" id="IPR001021">
    <property type="entry name" value="Ribosomal_bL25_long"/>
</dbReference>
<dbReference type="InterPro" id="IPR029751">
    <property type="entry name" value="Ribosomal_L25_dom"/>
</dbReference>
<dbReference type="InterPro" id="IPR020930">
    <property type="entry name" value="Ribosomal_uL5_bac-type"/>
</dbReference>
<dbReference type="NCBIfam" id="TIGR00731">
    <property type="entry name" value="bL25_bact_ctc"/>
    <property type="match status" value="1"/>
</dbReference>
<dbReference type="NCBIfam" id="NF004128">
    <property type="entry name" value="PRK05618.1-2"/>
    <property type="match status" value="1"/>
</dbReference>
<dbReference type="NCBIfam" id="NF004612">
    <property type="entry name" value="PRK05943.1"/>
    <property type="match status" value="1"/>
</dbReference>
<dbReference type="PANTHER" id="PTHR33284">
    <property type="entry name" value="RIBOSOMAL PROTEIN L25/GLN-TRNA SYNTHETASE, ANTI-CODON-BINDING DOMAIN-CONTAINING PROTEIN"/>
    <property type="match status" value="1"/>
</dbReference>
<dbReference type="PANTHER" id="PTHR33284:SF1">
    <property type="entry name" value="RIBOSOMAL PROTEIN L25_GLN-TRNA SYNTHETASE, ANTI-CODON-BINDING DOMAIN-CONTAINING PROTEIN"/>
    <property type="match status" value="1"/>
</dbReference>
<dbReference type="Pfam" id="PF01386">
    <property type="entry name" value="Ribosomal_L25p"/>
    <property type="match status" value="1"/>
</dbReference>
<dbReference type="Pfam" id="PF14693">
    <property type="entry name" value="Ribosomal_TL5_C"/>
    <property type="match status" value="1"/>
</dbReference>
<dbReference type="SUPFAM" id="SSF50715">
    <property type="entry name" value="Ribosomal protein L25-like"/>
    <property type="match status" value="1"/>
</dbReference>
<proteinExistence type="inferred from homology"/>
<gene>
    <name evidence="1" type="primary">rplY</name>
    <name evidence="1" type="synonym">ctc</name>
    <name type="ordered locus">M446_2392</name>
</gene>
<protein>
    <recommendedName>
        <fullName evidence="1">Large ribosomal subunit protein bL25</fullName>
    </recommendedName>
    <alternativeName>
        <fullName evidence="2">50S ribosomal protein L25</fullName>
    </alternativeName>
    <alternativeName>
        <fullName evidence="1">General stress protein CTC</fullName>
    </alternativeName>
</protein>
<keyword id="KW-0687">Ribonucleoprotein</keyword>
<keyword id="KW-0689">Ribosomal protein</keyword>
<keyword id="KW-0694">RNA-binding</keyword>
<keyword id="KW-0699">rRNA-binding</keyword>
<feature type="chain" id="PRO_1000142535" description="Large ribosomal subunit protein bL25">
    <location>
        <begin position="1"/>
        <end position="217"/>
    </location>
</feature>
<reference key="1">
    <citation type="submission" date="2008-02" db="EMBL/GenBank/DDBJ databases">
        <title>Complete sequence of chromosome of Methylobacterium sp. 4-46.</title>
        <authorList>
            <consortium name="US DOE Joint Genome Institute"/>
            <person name="Copeland A."/>
            <person name="Lucas S."/>
            <person name="Lapidus A."/>
            <person name="Glavina del Rio T."/>
            <person name="Dalin E."/>
            <person name="Tice H."/>
            <person name="Bruce D."/>
            <person name="Goodwin L."/>
            <person name="Pitluck S."/>
            <person name="Chertkov O."/>
            <person name="Brettin T."/>
            <person name="Detter J.C."/>
            <person name="Han C."/>
            <person name="Kuske C.R."/>
            <person name="Schmutz J."/>
            <person name="Larimer F."/>
            <person name="Land M."/>
            <person name="Hauser L."/>
            <person name="Kyrpides N."/>
            <person name="Ivanova N."/>
            <person name="Marx C.J."/>
            <person name="Richardson P."/>
        </authorList>
    </citation>
    <scope>NUCLEOTIDE SEQUENCE [LARGE SCALE GENOMIC DNA]</scope>
    <source>
        <strain>4-46</strain>
    </source>
</reference>
<comment type="function">
    <text evidence="1">This is one of the proteins that binds to the 5S RNA in the ribosome where it forms part of the central protuberance.</text>
</comment>
<comment type="subunit">
    <text evidence="1">Part of the 50S ribosomal subunit; part of the 5S rRNA/L5/L18/L25 subcomplex. Contacts the 5S rRNA. Binds to the 5S rRNA independently of L5 and L18.</text>
</comment>
<comment type="similarity">
    <text evidence="1">Belongs to the bacterial ribosomal protein bL25 family. CTC subfamily.</text>
</comment>
<sequence length="217" mass="22473">MSAVKPLEAVARDRVGKGAARAVRRQGRVPAVIYGGGQSPQSISLDANQTHHLIYGGGFLSTVFEIAVDGRTIRAIPRDYQLDPVKDTPLHVDFLRVVSGQTIEVEVPVHFVNQDAAPGLKQKSGTLNVVLHTITLAVSPDAIPDAVNVDLTGKDIGDTVHVSDLVLPTGASLALAPSETVATLVPPTKLGADVEAEEAAVAEAARAGSAAEAAKEG</sequence>
<name>RL25_METS4</name>